<feature type="chain" id="PRO_1000092159" description="Sulfate adenylyltransferase subunit 1">
    <location>
        <begin position="1"/>
        <end position="469"/>
    </location>
</feature>
<feature type="domain" description="tr-type G">
    <location>
        <begin position="22"/>
        <end position="236"/>
    </location>
</feature>
<feature type="region of interest" description="G1" evidence="1">
    <location>
        <begin position="31"/>
        <end position="38"/>
    </location>
</feature>
<feature type="region of interest" description="G2" evidence="1">
    <location>
        <begin position="89"/>
        <end position="93"/>
    </location>
</feature>
<feature type="region of interest" description="G3" evidence="1">
    <location>
        <begin position="110"/>
        <end position="113"/>
    </location>
</feature>
<feature type="region of interest" description="G4" evidence="1">
    <location>
        <begin position="165"/>
        <end position="168"/>
    </location>
</feature>
<feature type="region of interest" description="G5" evidence="1">
    <location>
        <begin position="202"/>
        <end position="204"/>
    </location>
</feature>
<feature type="binding site" evidence="2">
    <location>
        <begin position="31"/>
        <end position="38"/>
    </location>
    <ligand>
        <name>GTP</name>
        <dbReference type="ChEBI" id="CHEBI:37565"/>
    </ligand>
</feature>
<feature type="binding site" evidence="2">
    <location>
        <begin position="110"/>
        <end position="114"/>
    </location>
    <ligand>
        <name>GTP</name>
        <dbReference type="ChEBI" id="CHEBI:37565"/>
    </ligand>
</feature>
<feature type="binding site" evidence="2">
    <location>
        <begin position="165"/>
        <end position="168"/>
    </location>
    <ligand>
        <name>GTP</name>
        <dbReference type="ChEBI" id="CHEBI:37565"/>
    </ligand>
</feature>
<reference key="1">
    <citation type="submission" date="2008-02" db="EMBL/GenBank/DDBJ databases">
        <title>Complete sequence of Shewanella woodyi ATCC 51908.</title>
        <authorList>
            <consortium name="US DOE Joint Genome Institute"/>
            <person name="Copeland A."/>
            <person name="Lucas S."/>
            <person name="Lapidus A."/>
            <person name="Glavina del Rio T."/>
            <person name="Dalin E."/>
            <person name="Tice H."/>
            <person name="Bruce D."/>
            <person name="Goodwin L."/>
            <person name="Pitluck S."/>
            <person name="Sims D."/>
            <person name="Brettin T."/>
            <person name="Detter J.C."/>
            <person name="Han C."/>
            <person name="Kuske C.R."/>
            <person name="Schmutz J."/>
            <person name="Larimer F."/>
            <person name="Land M."/>
            <person name="Hauser L."/>
            <person name="Kyrpides N."/>
            <person name="Lykidis A."/>
            <person name="Zhao J.-S."/>
            <person name="Richardson P."/>
        </authorList>
    </citation>
    <scope>NUCLEOTIDE SEQUENCE [LARGE SCALE GENOMIC DNA]</scope>
    <source>
        <strain>ATCC 51908 / MS32</strain>
    </source>
</reference>
<comment type="function">
    <text evidence="2">With CysD forms the ATP sulfurylase (ATPS) that catalyzes the adenylation of sulfate producing adenosine 5'-phosphosulfate (APS) and diphosphate, the first enzymatic step in sulfur assimilation pathway. APS synthesis involves the formation of a high-energy phosphoric-sulfuric acid anhydride bond driven by GTP hydrolysis by CysN coupled to ATP hydrolysis by CysD.</text>
</comment>
<comment type="catalytic activity">
    <reaction evidence="2">
        <text>sulfate + ATP + H(+) = adenosine 5'-phosphosulfate + diphosphate</text>
        <dbReference type="Rhea" id="RHEA:18133"/>
        <dbReference type="ChEBI" id="CHEBI:15378"/>
        <dbReference type="ChEBI" id="CHEBI:16189"/>
        <dbReference type="ChEBI" id="CHEBI:30616"/>
        <dbReference type="ChEBI" id="CHEBI:33019"/>
        <dbReference type="ChEBI" id="CHEBI:58243"/>
        <dbReference type="EC" id="2.7.7.4"/>
    </reaction>
</comment>
<comment type="pathway">
    <text evidence="2">Sulfur metabolism; hydrogen sulfide biosynthesis; sulfite from sulfate: step 1/3.</text>
</comment>
<comment type="subunit">
    <text evidence="2">Heterodimer composed of CysD, the smaller subunit, and CysN.</text>
</comment>
<comment type="similarity">
    <text evidence="2">Belongs to the TRAFAC class translation factor GTPase superfamily. Classic translation factor GTPase family. CysN/NodQ subfamily.</text>
</comment>
<keyword id="KW-0067">ATP-binding</keyword>
<keyword id="KW-0342">GTP-binding</keyword>
<keyword id="KW-0547">Nucleotide-binding</keyword>
<keyword id="KW-0548">Nucleotidyltransferase</keyword>
<keyword id="KW-1185">Reference proteome</keyword>
<keyword id="KW-0808">Transferase</keyword>
<protein>
    <recommendedName>
        <fullName evidence="2">Sulfate adenylyltransferase subunit 1</fullName>
        <ecNumber evidence="2">2.7.7.4</ecNumber>
    </recommendedName>
    <alternativeName>
        <fullName evidence="2">ATP-sulfurylase large subunit</fullName>
    </alternativeName>
    <alternativeName>
        <fullName evidence="2">Sulfate adenylate transferase</fullName>
        <shortName evidence="2">SAT</shortName>
    </alternativeName>
</protein>
<sequence length="469" mass="52737">MTTSSNLISSDIEEYLKVHENKDMLRVLTCGSVDDGKSTLIGRLLFDSKMIFEDQMAAIEKDSKRFNTTDDSFDLALLVDGLQSEREQGITIDVAYRYFTTEQRKFIIADTPGHEQYTRNMATGASTCDLAIILIDARHGVQVQTRRHSFICSQLGIKHVIIAINKMDAIDYDQATYQKIKKEYREFAEDLSFSDVRFVPISALKGDNVVNESPNMTWYPGSTLLKLLNTVSVEQDRSESFRFQVQYVNRPNLDFRGFCGTIGSGEIRVGDTVATLPSNKESRVKSIVTFDGELEKAVAGQAVTLTLEDEIDISRGDMLVRPHDKPFSVSHFEADVVWMTEEPLCVDREYAIKVGSKSVYGYADAINHKVDVNTLEKQSAQQLALNEIGNCHFAVTEPVQFDAYDTNRSTGSFIIIDRLTNVTVGAGMIRNPIEVKSTKAHEYSEFEIEMNALVRKHFPHWGAKDISKG</sequence>
<dbReference type="EC" id="2.7.7.4" evidence="2"/>
<dbReference type="EMBL" id="CP000961">
    <property type="protein sequence ID" value="ACA85972.1"/>
    <property type="molecule type" value="Genomic_DNA"/>
</dbReference>
<dbReference type="RefSeq" id="WP_012324318.1">
    <property type="nucleotide sequence ID" value="NC_010506.1"/>
</dbReference>
<dbReference type="SMR" id="B1KMH4"/>
<dbReference type="STRING" id="392500.Swoo_1687"/>
<dbReference type="KEGG" id="swd:Swoo_1687"/>
<dbReference type="eggNOG" id="COG2895">
    <property type="taxonomic scope" value="Bacteria"/>
</dbReference>
<dbReference type="HOGENOM" id="CLU_007265_5_2_6"/>
<dbReference type="UniPathway" id="UPA00140">
    <property type="reaction ID" value="UER00204"/>
</dbReference>
<dbReference type="Proteomes" id="UP000002168">
    <property type="component" value="Chromosome"/>
</dbReference>
<dbReference type="GO" id="GO:0005524">
    <property type="term" value="F:ATP binding"/>
    <property type="evidence" value="ECO:0007669"/>
    <property type="project" value="UniProtKB-KW"/>
</dbReference>
<dbReference type="GO" id="GO:0005525">
    <property type="term" value="F:GTP binding"/>
    <property type="evidence" value="ECO:0007669"/>
    <property type="project" value="UniProtKB-UniRule"/>
</dbReference>
<dbReference type="GO" id="GO:0003924">
    <property type="term" value="F:GTPase activity"/>
    <property type="evidence" value="ECO:0007669"/>
    <property type="project" value="InterPro"/>
</dbReference>
<dbReference type="GO" id="GO:0097216">
    <property type="term" value="F:guanosine tetraphosphate binding"/>
    <property type="evidence" value="ECO:0007669"/>
    <property type="project" value="UniProtKB-ARBA"/>
</dbReference>
<dbReference type="GO" id="GO:0004781">
    <property type="term" value="F:sulfate adenylyltransferase (ATP) activity"/>
    <property type="evidence" value="ECO:0007669"/>
    <property type="project" value="UniProtKB-UniRule"/>
</dbReference>
<dbReference type="GO" id="GO:0070814">
    <property type="term" value="P:hydrogen sulfide biosynthetic process"/>
    <property type="evidence" value="ECO:0007669"/>
    <property type="project" value="UniProtKB-UniRule"/>
</dbReference>
<dbReference type="GO" id="GO:0000103">
    <property type="term" value="P:sulfate assimilation"/>
    <property type="evidence" value="ECO:0007669"/>
    <property type="project" value="UniProtKB-UniRule"/>
</dbReference>
<dbReference type="CDD" id="cd04166">
    <property type="entry name" value="CysN_ATPS"/>
    <property type="match status" value="1"/>
</dbReference>
<dbReference type="CDD" id="cd03695">
    <property type="entry name" value="CysN_NodQ_II"/>
    <property type="match status" value="1"/>
</dbReference>
<dbReference type="CDD" id="cd04095">
    <property type="entry name" value="CysN_NoDQ_III"/>
    <property type="match status" value="1"/>
</dbReference>
<dbReference type="FunFam" id="2.40.30.10:FF:000027">
    <property type="entry name" value="Sulfate adenylyltransferase subunit 1"/>
    <property type="match status" value="1"/>
</dbReference>
<dbReference type="FunFam" id="3.40.50.300:FF:000119">
    <property type="entry name" value="Sulfate adenylyltransferase subunit 1"/>
    <property type="match status" value="1"/>
</dbReference>
<dbReference type="Gene3D" id="3.40.50.300">
    <property type="entry name" value="P-loop containing nucleotide triphosphate hydrolases"/>
    <property type="match status" value="1"/>
</dbReference>
<dbReference type="Gene3D" id="2.40.30.10">
    <property type="entry name" value="Translation factors"/>
    <property type="match status" value="2"/>
</dbReference>
<dbReference type="HAMAP" id="MF_00062">
    <property type="entry name" value="Sulf_adenylyltr_sub1"/>
    <property type="match status" value="1"/>
</dbReference>
<dbReference type="InterPro" id="IPR041757">
    <property type="entry name" value="CysN_GTP-bd"/>
</dbReference>
<dbReference type="InterPro" id="IPR044138">
    <property type="entry name" value="CysN_II"/>
</dbReference>
<dbReference type="InterPro" id="IPR044139">
    <property type="entry name" value="CysN_NoDQ_III"/>
</dbReference>
<dbReference type="InterPro" id="IPR004161">
    <property type="entry name" value="EFTu-like_2"/>
</dbReference>
<dbReference type="InterPro" id="IPR031157">
    <property type="entry name" value="G_TR_CS"/>
</dbReference>
<dbReference type="InterPro" id="IPR054696">
    <property type="entry name" value="GTP-eEF1A_C"/>
</dbReference>
<dbReference type="InterPro" id="IPR027417">
    <property type="entry name" value="P-loop_NTPase"/>
</dbReference>
<dbReference type="InterPro" id="IPR005225">
    <property type="entry name" value="Small_GTP-bd"/>
</dbReference>
<dbReference type="InterPro" id="IPR011779">
    <property type="entry name" value="SO4_adenylTrfase_lsu"/>
</dbReference>
<dbReference type="InterPro" id="IPR000795">
    <property type="entry name" value="T_Tr_GTP-bd_dom"/>
</dbReference>
<dbReference type="InterPro" id="IPR050100">
    <property type="entry name" value="TRAFAC_GTPase_members"/>
</dbReference>
<dbReference type="InterPro" id="IPR009000">
    <property type="entry name" value="Transl_B-barrel_sf"/>
</dbReference>
<dbReference type="InterPro" id="IPR009001">
    <property type="entry name" value="Transl_elong_EF1A/Init_IF2_C"/>
</dbReference>
<dbReference type="NCBIfam" id="TIGR02034">
    <property type="entry name" value="CysN"/>
    <property type="match status" value="1"/>
</dbReference>
<dbReference type="NCBIfam" id="NF003478">
    <property type="entry name" value="PRK05124.1"/>
    <property type="match status" value="1"/>
</dbReference>
<dbReference type="NCBIfam" id="NF004035">
    <property type="entry name" value="PRK05506.1"/>
    <property type="match status" value="1"/>
</dbReference>
<dbReference type="NCBIfam" id="TIGR00231">
    <property type="entry name" value="small_GTP"/>
    <property type="match status" value="1"/>
</dbReference>
<dbReference type="PANTHER" id="PTHR23115">
    <property type="entry name" value="TRANSLATION FACTOR"/>
    <property type="match status" value="1"/>
</dbReference>
<dbReference type="Pfam" id="PF22594">
    <property type="entry name" value="GTP-eEF1A_C"/>
    <property type="match status" value="1"/>
</dbReference>
<dbReference type="Pfam" id="PF00009">
    <property type="entry name" value="GTP_EFTU"/>
    <property type="match status" value="1"/>
</dbReference>
<dbReference type="Pfam" id="PF03144">
    <property type="entry name" value="GTP_EFTU_D2"/>
    <property type="match status" value="1"/>
</dbReference>
<dbReference type="PRINTS" id="PR00315">
    <property type="entry name" value="ELONGATNFCT"/>
</dbReference>
<dbReference type="SUPFAM" id="SSF50465">
    <property type="entry name" value="EF-Tu/eEF-1alpha/eIF2-gamma C-terminal domain"/>
    <property type="match status" value="1"/>
</dbReference>
<dbReference type="SUPFAM" id="SSF52540">
    <property type="entry name" value="P-loop containing nucleoside triphosphate hydrolases"/>
    <property type="match status" value="1"/>
</dbReference>
<dbReference type="SUPFAM" id="SSF50447">
    <property type="entry name" value="Translation proteins"/>
    <property type="match status" value="1"/>
</dbReference>
<dbReference type="PROSITE" id="PS00301">
    <property type="entry name" value="G_TR_1"/>
    <property type="match status" value="1"/>
</dbReference>
<dbReference type="PROSITE" id="PS51722">
    <property type="entry name" value="G_TR_2"/>
    <property type="match status" value="1"/>
</dbReference>
<proteinExistence type="inferred from homology"/>
<accession>B1KMH4</accession>
<name>CYSN_SHEWM</name>
<gene>
    <name evidence="2" type="primary">cysN</name>
    <name type="ordered locus">Swoo_1687</name>
</gene>
<evidence type="ECO:0000250" key="1"/>
<evidence type="ECO:0000255" key="2">
    <source>
        <dbReference type="HAMAP-Rule" id="MF_00062"/>
    </source>
</evidence>
<organism>
    <name type="scientific">Shewanella woodyi (strain ATCC 51908 / MS32)</name>
    <dbReference type="NCBI Taxonomy" id="392500"/>
    <lineage>
        <taxon>Bacteria</taxon>
        <taxon>Pseudomonadati</taxon>
        <taxon>Pseudomonadota</taxon>
        <taxon>Gammaproteobacteria</taxon>
        <taxon>Alteromonadales</taxon>
        <taxon>Shewanellaceae</taxon>
        <taxon>Shewanella</taxon>
    </lineage>
</organism>